<gene>
    <name evidence="1" type="primary">yidC</name>
    <name type="ordered locus">Shewana3_0006</name>
</gene>
<accession>A0KR32</accession>
<proteinExistence type="inferred from homology"/>
<comment type="function">
    <text evidence="1">Required for the insertion and/or proper folding and/or complex formation of integral membrane proteins into the membrane. Involved in integration of membrane proteins that insert both dependently and independently of the Sec translocase complex, as well as at least some lipoproteins. Aids folding of multispanning membrane proteins.</text>
</comment>
<comment type="subunit">
    <text evidence="1">Interacts with the Sec translocase complex via SecD. Specifically interacts with transmembrane segments of nascent integral membrane proteins during membrane integration.</text>
</comment>
<comment type="subcellular location">
    <subcellularLocation>
        <location evidence="1">Cell inner membrane</location>
        <topology evidence="1">Multi-pass membrane protein</topology>
    </subcellularLocation>
</comment>
<comment type="similarity">
    <text evidence="1">Belongs to the OXA1/ALB3/YidC family. Type 1 subfamily.</text>
</comment>
<evidence type="ECO:0000255" key="1">
    <source>
        <dbReference type="HAMAP-Rule" id="MF_01810"/>
    </source>
</evidence>
<keyword id="KW-0997">Cell inner membrane</keyword>
<keyword id="KW-1003">Cell membrane</keyword>
<keyword id="KW-0143">Chaperone</keyword>
<keyword id="KW-0472">Membrane</keyword>
<keyword id="KW-0653">Protein transport</keyword>
<keyword id="KW-0812">Transmembrane</keyword>
<keyword id="KW-1133">Transmembrane helix</keyword>
<keyword id="KW-0813">Transport</keyword>
<dbReference type="EMBL" id="CP000469">
    <property type="protein sequence ID" value="ABK46251.1"/>
    <property type="molecule type" value="Genomic_DNA"/>
</dbReference>
<dbReference type="RefSeq" id="WP_011715303.1">
    <property type="nucleotide sequence ID" value="NC_008577.1"/>
</dbReference>
<dbReference type="SMR" id="A0KR32"/>
<dbReference type="STRING" id="94122.Shewana3_0006"/>
<dbReference type="KEGG" id="shn:Shewana3_0006"/>
<dbReference type="eggNOG" id="COG0706">
    <property type="taxonomic scope" value="Bacteria"/>
</dbReference>
<dbReference type="HOGENOM" id="CLU_016535_3_0_6"/>
<dbReference type="OrthoDB" id="9780552at2"/>
<dbReference type="Proteomes" id="UP000002589">
    <property type="component" value="Chromosome"/>
</dbReference>
<dbReference type="GO" id="GO:0005886">
    <property type="term" value="C:plasma membrane"/>
    <property type="evidence" value="ECO:0007669"/>
    <property type="project" value="UniProtKB-SubCell"/>
</dbReference>
<dbReference type="GO" id="GO:0032977">
    <property type="term" value="F:membrane insertase activity"/>
    <property type="evidence" value="ECO:0007669"/>
    <property type="project" value="InterPro"/>
</dbReference>
<dbReference type="GO" id="GO:0051205">
    <property type="term" value="P:protein insertion into membrane"/>
    <property type="evidence" value="ECO:0007669"/>
    <property type="project" value="TreeGrafter"/>
</dbReference>
<dbReference type="GO" id="GO:0015031">
    <property type="term" value="P:protein transport"/>
    <property type="evidence" value="ECO:0007669"/>
    <property type="project" value="UniProtKB-KW"/>
</dbReference>
<dbReference type="CDD" id="cd20070">
    <property type="entry name" value="5TM_YidC_Alb3"/>
    <property type="match status" value="1"/>
</dbReference>
<dbReference type="CDD" id="cd19961">
    <property type="entry name" value="EcYidC-like_peri"/>
    <property type="match status" value="1"/>
</dbReference>
<dbReference type="FunFam" id="2.70.98.90:FF:000004">
    <property type="entry name" value="Membrane protein insertase YidC"/>
    <property type="match status" value="1"/>
</dbReference>
<dbReference type="Gene3D" id="2.70.98.90">
    <property type="match status" value="1"/>
</dbReference>
<dbReference type="HAMAP" id="MF_01810">
    <property type="entry name" value="YidC_type1"/>
    <property type="match status" value="1"/>
</dbReference>
<dbReference type="InterPro" id="IPR019998">
    <property type="entry name" value="Membr_insert_YidC"/>
</dbReference>
<dbReference type="InterPro" id="IPR028053">
    <property type="entry name" value="Membr_insert_YidC_N"/>
</dbReference>
<dbReference type="InterPro" id="IPR001708">
    <property type="entry name" value="YidC/ALB3/OXA1/COX18"/>
</dbReference>
<dbReference type="InterPro" id="IPR028055">
    <property type="entry name" value="YidC/Oxa/ALB_C"/>
</dbReference>
<dbReference type="InterPro" id="IPR047196">
    <property type="entry name" value="YidC_ALB_C"/>
</dbReference>
<dbReference type="InterPro" id="IPR038221">
    <property type="entry name" value="YidC_periplasmic_sf"/>
</dbReference>
<dbReference type="NCBIfam" id="NF002351">
    <property type="entry name" value="PRK01318.1-1"/>
    <property type="match status" value="1"/>
</dbReference>
<dbReference type="NCBIfam" id="NF002352">
    <property type="entry name" value="PRK01318.1-3"/>
    <property type="match status" value="1"/>
</dbReference>
<dbReference type="NCBIfam" id="TIGR03593">
    <property type="entry name" value="yidC_nterm"/>
    <property type="match status" value="1"/>
</dbReference>
<dbReference type="NCBIfam" id="TIGR03592">
    <property type="entry name" value="yidC_oxa1_cterm"/>
    <property type="match status" value="1"/>
</dbReference>
<dbReference type="PANTHER" id="PTHR12428:SF65">
    <property type="entry name" value="CYTOCHROME C OXIDASE ASSEMBLY PROTEIN COX18, MITOCHONDRIAL"/>
    <property type="match status" value="1"/>
</dbReference>
<dbReference type="PANTHER" id="PTHR12428">
    <property type="entry name" value="OXA1"/>
    <property type="match status" value="1"/>
</dbReference>
<dbReference type="Pfam" id="PF02096">
    <property type="entry name" value="60KD_IMP"/>
    <property type="match status" value="1"/>
</dbReference>
<dbReference type="Pfam" id="PF14849">
    <property type="entry name" value="YidC_periplas"/>
    <property type="match status" value="1"/>
</dbReference>
<dbReference type="PRINTS" id="PR00701">
    <property type="entry name" value="60KDINNERMP"/>
</dbReference>
<dbReference type="PRINTS" id="PR01900">
    <property type="entry name" value="YIDCPROTEIN"/>
</dbReference>
<name>YIDC_SHESA</name>
<organism>
    <name type="scientific">Shewanella sp. (strain ANA-3)</name>
    <dbReference type="NCBI Taxonomy" id="94122"/>
    <lineage>
        <taxon>Bacteria</taxon>
        <taxon>Pseudomonadati</taxon>
        <taxon>Pseudomonadota</taxon>
        <taxon>Gammaproteobacteria</taxon>
        <taxon>Alteromonadales</taxon>
        <taxon>Shewanellaceae</taxon>
        <taxon>Shewanella</taxon>
    </lineage>
</organism>
<sequence length="541" mass="60616">MESQRNILLIGLLFVSFLLWQQWQADKAPKPVATESSVVANATTNHSADVPEADTSVPAALTATQNLITVKTDQLDVQINPVGGDIVFAALVSHKLEQGKDQPFVLLEQTKDFTYIAQSGLIGRDGIDSSAKGRAAFAANKTEFTLADGQDTLEVPLTYVADNGVTYTKVFVFHRGKFNVDIDYKINNTSAAPLQVQMYGQIKQTIKPSESSMMMPTYRGAAFSTQDVRYEKYKFEDMSKSNLNQPTLGGWAAMLQHYFVSAWIPPATDSNTIFSSVSAGGLANIGFRGAVYDIAPGATQEISSQFYVGPKDQKALSALSDTLNLVVDYGFLWWLAVPIHWLLMFYQSFVGNWGVAIILITLTVRGLLFPLTKAQYTSMAKMRNLQPKLQDLKERFGDDRQKMGQAMMELYKKEKVNPMGGCLPILLQMPIFIALYWVLLESFELRHAPFMLWIHDLSVQDPYYILPLLMGASMFVMQKMQPIAPTMDPMQVKMMQWMPMIFTVFFLWFPSGLVLYWLVGNIVAIIQQKIIYAGLEKKGLK</sequence>
<reference key="1">
    <citation type="submission" date="2006-09" db="EMBL/GenBank/DDBJ databases">
        <title>Complete sequence of chromosome 1 of Shewanella sp. ANA-3.</title>
        <authorList>
            <person name="Copeland A."/>
            <person name="Lucas S."/>
            <person name="Lapidus A."/>
            <person name="Barry K."/>
            <person name="Detter J.C."/>
            <person name="Glavina del Rio T."/>
            <person name="Hammon N."/>
            <person name="Israni S."/>
            <person name="Dalin E."/>
            <person name="Tice H."/>
            <person name="Pitluck S."/>
            <person name="Chertkov O."/>
            <person name="Brettin T."/>
            <person name="Bruce D."/>
            <person name="Han C."/>
            <person name="Tapia R."/>
            <person name="Gilna P."/>
            <person name="Schmutz J."/>
            <person name="Larimer F."/>
            <person name="Land M."/>
            <person name="Hauser L."/>
            <person name="Kyrpides N."/>
            <person name="Kim E."/>
            <person name="Newman D."/>
            <person name="Salticov C."/>
            <person name="Konstantinidis K."/>
            <person name="Klappenback J."/>
            <person name="Tiedje J."/>
            <person name="Richardson P."/>
        </authorList>
    </citation>
    <scope>NUCLEOTIDE SEQUENCE [LARGE SCALE GENOMIC DNA]</scope>
    <source>
        <strain>ANA-3</strain>
    </source>
</reference>
<feature type="chain" id="PRO_1000070172" description="Membrane protein insertase YidC">
    <location>
        <begin position="1"/>
        <end position="541"/>
    </location>
</feature>
<feature type="transmembrane region" description="Helical" evidence="1">
    <location>
        <begin position="6"/>
        <end position="26"/>
    </location>
</feature>
<feature type="transmembrane region" description="Helical" evidence="1">
    <location>
        <begin position="349"/>
        <end position="369"/>
    </location>
</feature>
<feature type="transmembrane region" description="Helical" evidence="1">
    <location>
        <begin position="420"/>
        <end position="440"/>
    </location>
</feature>
<feature type="transmembrane region" description="Helical" evidence="1">
    <location>
        <begin position="457"/>
        <end position="477"/>
    </location>
</feature>
<feature type="transmembrane region" description="Helical" evidence="1">
    <location>
        <begin position="500"/>
        <end position="520"/>
    </location>
</feature>
<protein>
    <recommendedName>
        <fullName evidence="1">Membrane protein insertase YidC</fullName>
    </recommendedName>
    <alternativeName>
        <fullName evidence="1">Foldase YidC</fullName>
    </alternativeName>
    <alternativeName>
        <fullName evidence="1">Membrane integrase YidC</fullName>
    </alternativeName>
    <alternativeName>
        <fullName evidence="1">Membrane protein YidC</fullName>
    </alternativeName>
</protein>